<evidence type="ECO:0000255" key="1"/>
<evidence type="ECO:0000269" key="2">
    <source>
    </source>
</evidence>
<evidence type="ECO:0000269" key="3">
    <source>
    </source>
</evidence>
<evidence type="ECO:0000305" key="4"/>
<protein>
    <recommendedName>
        <fullName>Cysteine-rich hydrophobic domain-containing protein 2</fullName>
    </recommendedName>
    <alternativeName>
        <fullName>BrX-like translocated in leukemia</fullName>
    </alternativeName>
</protein>
<feature type="chain" id="PRO_0000189556" description="Cysteine-rich hydrophobic domain-containing protein 2">
    <location>
        <begin position="1"/>
        <end position="165"/>
    </location>
</feature>
<feature type="coiled-coil region" evidence="1">
    <location>
        <begin position="1"/>
        <end position="26"/>
    </location>
</feature>
<feature type="short sequence motif" description="CHIC motif (Cys-rich)">
    <location>
        <begin position="88"/>
        <end position="106"/>
    </location>
</feature>
<feature type="site" description="Breakpoint for translocation to form CHIC2-ETV6 in AML">
    <location>
        <begin position="111"/>
        <end position="112"/>
    </location>
</feature>
<feature type="mutagenesis site" description="Loss of palmitoylation. Abolishes membrane association." evidence="3">
    <original>CGCLCCCC</original>
    <variation>SGSLSSSS</variation>
    <location>
        <begin position="88"/>
        <end position="95"/>
    </location>
</feature>
<reference key="1">
    <citation type="journal article" date="1999" name="Blood">
        <title>Fusion of a novel gene, BTL, to ETV6 in acute myeloid leukemias with a t(4;12)(q11-q12;p13).</title>
        <authorList>
            <person name="Cools J."/>
            <person name="Bilhou-Nabera C."/>
            <person name="Wlodarska I."/>
            <person name="Cabrol C."/>
            <person name="Talmant P."/>
            <person name="Bernard P."/>
            <person name="Hagemeijer A."/>
            <person name="Marynen P."/>
        </authorList>
    </citation>
    <scope>NUCLEOTIDE SEQUENCE [MRNA]</scope>
    <scope>CHROMOSOMAL TRANSLOCATION WITH ETV6</scope>
</reference>
<reference key="2">
    <citation type="journal article" date="2004" name="Nat. Genet.">
        <title>Complete sequencing and characterization of 21,243 full-length human cDNAs.</title>
        <authorList>
            <person name="Ota T."/>
            <person name="Suzuki Y."/>
            <person name="Nishikawa T."/>
            <person name="Otsuki T."/>
            <person name="Sugiyama T."/>
            <person name="Irie R."/>
            <person name="Wakamatsu A."/>
            <person name="Hayashi K."/>
            <person name="Sato H."/>
            <person name="Nagai K."/>
            <person name="Kimura K."/>
            <person name="Makita H."/>
            <person name="Sekine M."/>
            <person name="Obayashi M."/>
            <person name="Nishi T."/>
            <person name="Shibahara T."/>
            <person name="Tanaka T."/>
            <person name="Ishii S."/>
            <person name="Yamamoto J."/>
            <person name="Saito K."/>
            <person name="Kawai Y."/>
            <person name="Isono Y."/>
            <person name="Nakamura Y."/>
            <person name="Nagahari K."/>
            <person name="Murakami K."/>
            <person name="Yasuda T."/>
            <person name="Iwayanagi T."/>
            <person name="Wagatsuma M."/>
            <person name="Shiratori A."/>
            <person name="Sudo H."/>
            <person name="Hosoiri T."/>
            <person name="Kaku Y."/>
            <person name="Kodaira H."/>
            <person name="Kondo H."/>
            <person name="Sugawara M."/>
            <person name="Takahashi M."/>
            <person name="Kanda K."/>
            <person name="Yokoi T."/>
            <person name="Furuya T."/>
            <person name="Kikkawa E."/>
            <person name="Omura Y."/>
            <person name="Abe K."/>
            <person name="Kamihara K."/>
            <person name="Katsuta N."/>
            <person name="Sato K."/>
            <person name="Tanikawa M."/>
            <person name="Yamazaki M."/>
            <person name="Ninomiya K."/>
            <person name="Ishibashi T."/>
            <person name="Yamashita H."/>
            <person name="Murakawa K."/>
            <person name="Fujimori K."/>
            <person name="Tanai H."/>
            <person name="Kimata M."/>
            <person name="Watanabe M."/>
            <person name="Hiraoka S."/>
            <person name="Chiba Y."/>
            <person name="Ishida S."/>
            <person name="Ono Y."/>
            <person name="Takiguchi S."/>
            <person name="Watanabe S."/>
            <person name="Yosida M."/>
            <person name="Hotuta T."/>
            <person name="Kusano J."/>
            <person name="Kanehori K."/>
            <person name="Takahashi-Fujii A."/>
            <person name="Hara H."/>
            <person name="Tanase T.-O."/>
            <person name="Nomura Y."/>
            <person name="Togiya S."/>
            <person name="Komai F."/>
            <person name="Hara R."/>
            <person name="Takeuchi K."/>
            <person name="Arita M."/>
            <person name="Imose N."/>
            <person name="Musashino K."/>
            <person name="Yuuki H."/>
            <person name="Oshima A."/>
            <person name="Sasaki N."/>
            <person name="Aotsuka S."/>
            <person name="Yoshikawa Y."/>
            <person name="Matsunawa H."/>
            <person name="Ichihara T."/>
            <person name="Shiohata N."/>
            <person name="Sano S."/>
            <person name="Moriya S."/>
            <person name="Momiyama H."/>
            <person name="Satoh N."/>
            <person name="Takami S."/>
            <person name="Terashima Y."/>
            <person name="Suzuki O."/>
            <person name="Nakagawa S."/>
            <person name="Senoh A."/>
            <person name="Mizoguchi H."/>
            <person name="Goto Y."/>
            <person name="Shimizu F."/>
            <person name="Wakebe H."/>
            <person name="Hishigaki H."/>
            <person name="Watanabe T."/>
            <person name="Sugiyama A."/>
            <person name="Takemoto M."/>
            <person name="Kawakami B."/>
            <person name="Yamazaki M."/>
            <person name="Watanabe K."/>
            <person name="Kumagai A."/>
            <person name="Itakura S."/>
            <person name="Fukuzumi Y."/>
            <person name="Fujimori Y."/>
            <person name="Komiyama M."/>
            <person name="Tashiro H."/>
            <person name="Tanigami A."/>
            <person name="Fujiwara T."/>
            <person name="Ono T."/>
            <person name="Yamada K."/>
            <person name="Fujii Y."/>
            <person name="Ozaki K."/>
            <person name="Hirao M."/>
            <person name="Ohmori Y."/>
            <person name="Kawabata A."/>
            <person name="Hikiji T."/>
            <person name="Kobatake N."/>
            <person name="Inagaki H."/>
            <person name="Ikema Y."/>
            <person name="Okamoto S."/>
            <person name="Okitani R."/>
            <person name="Kawakami T."/>
            <person name="Noguchi S."/>
            <person name="Itoh T."/>
            <person name="Shigeta K."/>
            <person name="Senba T."/>
            <person name="Matsumura K."/>
            <person name="Nakajima Y."/>
            <person name="Mizuno T."/>
            <person name="Morinaga M."/>
            <person name="Sasaki M."/>
            <person name="Togashi T."/>
            <person name="Oyama M."/>
            <person name="Hata H."/>
            <person name="Watanabe M."/>
            <person name="Komatsu T."/>
            <person name="Mizushima-Sugano J."/>
            <person name="Satoh T."/>
            <person name="Shirai Y."/>
            <person name="Takahashi Y."/>
            <person name="Nakagawa K."/>
            <person name="Okumura K."/>
            <person name="Nagase T."/>
            <person name="Nomura N."/>
            <person name="Kikuchi H."/>
            <person name="Masuho Y."/>
            <person name="Yamashita R."/>
            <person name="Nakai K."/>
            <person name="Yada T."/>
            <person name="Nakamura Y."/>
            <person name="Ohara O."/>
            <person name="Isogai T."/>
            <person name="Sugano S."/>
        </authorList>
    </citation>
    <scope>NUCLEOTIDE SEQUENCE [LARGE SCALE MRNA]</scope>
    <source>
        <tissue>Brain</tissue>
    </source>
</reference>
<reference key="3">
    <citation type="submission" date="2005-07" db="EMBL/GenBank/DDBJ databases">
        <authorList>
            <person name="Mural R.J."/>
            <person name="Istrail S."/>
            <person name="Sutton G.G."/>
            <person name="Florea L."/>
            <person name="Halpern A.L."/>
            <person name="Mobarry C.M."/>
            <person name="Lippert R."/>
            <person name="Walenz B."/>
            <person name="Shatkay H."/>
            <person name="Dew I."/>
            <person name="Miller J.R."/>
            <person name="Flanigan M.J."/>
            <person name="Edwards N.J."/>
            <person name="Bolanos R."/>
            <person name="Fasulo D."/>
            <person name="Halldorsson B.V."/>
            <person name="Hannenhalli S."/>
            <person name="Turner R."/>
            <person name="Yooseph S."/>
            <person name="Lu F."/>
            <person name="Nusskern D.R."/>
            <person name="Shue B.C."/>
            <person name="Zheng X.H."/>
            <person name="Zhong F."/>
            <person name="Delcher A.L."/>
            <person name="Huson D.H."/>
            <person name="Kravitz S.A."/>
            <person name="Mouchard L."/>
            <person name="Reinert K."/>
            <person name="Remington K.A."/>
            <person name="Clark A.G."/>
            <person name="Waterman M.S."/>
            <person name="Eichler E.E."/>
            <person name="Adams M.D."/>
            <person name="Hunkapiller M.W."/>
            <person name="Myers E.W."/>
            <person name="Venter J.C."/>
        </authorList>
    </citation>
    <scope>NUCLEOTIDE SEQUENCE [LARGE SCALE GENOMIC DNA]</scope>
</reference>
<reference key="4">
    <citation type="journal article" date="2004" name="Genome Res.">
        <title>The status, quality, and expansion of the NIH full-length cDNA project: the Mammalian Gene Collection (MGC).</title>
        <authorList>
            <consortium name="The MGC Project Team"/>
        </authorList>
    </citation>
    <scope>NUCLEOTIDE SEQUENCE [LARGE SCALE MRNA]</scope>
    <source>
        <tissue>Skin</tissue>
    </source>
</reference>
<reference key="5">
    <citation type="journal article" date="2001" name="FEBS Lett.">
        <title>A new family of small, palmitoylated, membrane-associated proteins, characterized by the presence of a cysteine-rich hydrophobic motif.</title>
        <authorList>
            <person name="Cools J."/>
            <person name="Mentens N."/>
            <person name="Marynen P."/>
        </authorList>
    </citation>
    <scope>SUBCELLULAR LOCATION</scope>
    <scope>MUTAGENESIS OF 88-CYS--CYS-95</scope>
    <scope>PALMITOYLATION</scope>
</reference>
<comment type="interaction">
    <interactant intactId="EBI-741528">
        <id>Q9UKJ5</id>
    </interactant>
    <interactant intactId="EBI-10173507">
        <id>Q6UY14-3</id>
        <label>ADAMTSL4</label>
    </interactant>
    <organismsDiffer>false</organismsDiffer>
    <experiments>3</experiments>
</comment>
<comment type="interaction">
    <interactant intactId="EBI-741528">
        <id>Q9UKJ5</id>
    </interactant>
    <interactant intactId="EBI-727098">
        <id>P21549</id>
        <label>AGXT</label>
    </interactant>
    <organismsDiffer>false</organismsDiffer>
    <experiments>3</experiments>
</comment>
<comment type="interaction">
    <interactant intactId="EBI-741528">
        <id>Q9UKJ5</id>
    </interactant>
    <interactant intactId="EBI-4400025">
        <id>Q9Y2T1</id>
        <label>AXIN2</label>
    </interactant>
    <organismsDiffer>false</organismsDiffer>
    <experiments>3</experiments>
</comment>
<comment type="interaction">
    <interactant intactId="EBI-741528">
        <id>Q9UKJ5</id>
    </interactant>
    <interactant intactId="EBI-2817707">
        <id>Q9BXJ5</id>
        <label>C1QTNF2</label>
    </interactant>
    <organismsDiffer>false</organismsDiffer>
    <experiments>3</experiments>
</comment>
<comment type="interaction">
    <interactant intactId="EBI-741528">
        <id>Q9UKJ5</id>
    </interactant>
    <interactant intactId="EBI-3866279">
        <id>Q9BWT7</id>
        <label>CARD10</label>
    </interactant>
    <organismsDiffer>false</organismsDiffer>
    <experiments>3</experiments>
</comment>
<comment type="interaction">
    <interactant intactId="EBI-741528">
        <id>Q9UKJ5</id>
    </interactant>
    <interactant intactId="EBI-744545">
        <id>Q8NEC5</id>
        <label>CATSPER1</label>
    </interactant>
    <organismsDiffer>false</organismsDiffer>
    <experiments>4</experiments>
</comment>
<comment type="interaction">
    <interactant intactId="EBI-741528">
        <id>Q9UKJ5</id>
    </interactant>
    <interactant intactId="EBI-741724">
        <id>Q8NA61</id>
        <label>CBY2</label>
    </interactant>
    <organismsDiffer>false</organismsDiffer>
    <experiments>3</experiments>
</comment>
<comment type="interaction">
    <interactant intactId="EBI-741528">
        <id>Q9UKJ5</id>
    </interactant>
    <interactant intactId="EBI-1181367">
        <id>Q01850</id>
        <label>CDR2</label>
    </interactant>
    <organismsDiffer>false</organismsDiffer>
    <experiments>7</experiments>
</comment>
<comment type="interaction">
    <interactant intactId="EBI-741528">
        <id>Q9UKJ5</id>
    </interactant>
    <interactant intactId="EBI-744115">
        <id>Q9C0F1</id>
        <label>CEP44</label>
    </interactant>
    <organismsDiffer>false</organismsDiffer>
    <experiments>3</experiments>
</comment>
<comment type="interaction">
    <interactant intactId="EBI-741528">
        <id>Q9UKJ5</id>
    </interactant>
    <interactant intactId="EBI-3867333">
        <id>A8MQ03</id>
        <label>CYSRT1</label>
    </interactant>
    <organismsDiffer>false</organismsDiffer>
    <experiments>3</experiments>
</comment>
<comment type="interaction">
    <interactant intactId="EBI-741528">
        <id>Q9UKJ5</id>
    </interactant>
    <interactant intactId="EBI-742362">
        <id>O96015</id>
        <label>DNAL4</label>
    </interactant>
    <organismsDiffer>false</organismsDiffer>
    <experiments>3</experiments>
</comment>
<comment type="interaction">
    <interactant intactId="EBI-741528">
        <id>Q9UKJ5</id>
    </interactant>
    <interactant intactId="EBI-744099">
        <id>Q9H0I2</id>
        <label>ENKD1</label>
    </interactant>
    <organismsDiffer>false</organismsDiffer>
    <experiments>3</experiments>
</comment>
<comment type="interaction">
    <interactant intactId="EBI-741528">
        <id>Q9UKJ5</id>
    </interactant>
    <interactant intactId="EBI-11956479">
        <id>P23142-4</id>
        <label>FBLN1</label>
    </interactant>
    <organismsDiffer>false</organismsDiffer>
    <experiments>3</experiments>
</comment>
<comment type="interaction">
    <interactant intactId="EBI-741528">
        <id>Q9UKJ5</id>
    </interactant>
    <interactant intactId="EBI-10172181">
        <id>Q53SE7</id>
        <label>FLJ13057</label>
    </interactant>
    <organismsDiffer>false</organismsDiffer>
    <experiments>3</experiments>
</comment>
<comment type="interaction">
    <interactant intactId="EBI-741528">
        <id>Q9UKJ5</id>
    </interactant>
    <interactant intactId="EBI-2548508">
        <id>Q96IK5</id>
        <label>GMCL1</label>
    </interactant>
    <organismsDiffer>false</organismsDiffer>
    <experiments>3</experiments>
</comment>
<comment type="interaction">
    <interactant intactId="EBI-741528">
        <id>Q9UKJ5</id>
    </interactant>
    <interactant intactId="EBI-740785">
        <id>P49639</id>
        <label>HOXA1</label>
    </interactant>
    <organismsDiffer>false</organismsDiffer>
    <experiments>4</experiments>
</comment>
<comment type="interaction">
    <interactant intactId="EBI-741528">
        <id>Q9UKJ5</id>
    </interactant>
    <interactant intactId="EBI-2556193">
        <id>Q63ZY3</id>
        <label>KANK2</label>
    </interactant>
    <organismsDiffer>false</organismsDiffer>
    <experiments>3</experiments>
</comment>
<comment type="interaction">
    <interactant intactId="EBI-741528">
        <id>Q9UKJ5</id>
    </interactant>
    <interactant intactId="EBI-10171697">
        <id>Q6A162</id>
        <label>KRT40</label>
    </interactant>
    <organismsDiffer>false</organismsDiffer>
    <experiments>3</experiments>
</comment>
<comment type="interaction">
    <interactant intactId="EBI-741528">
        <id>Q9UKJ5</id>
    </interactant>
    <interactant intactId="EBI-11959885">
        <id>Q07627</id>
        <label>KRTAP1-1</label>
    </interactant>
    <organismsDiffer>false</organismsDiffer>
    <experiments>3</experiments>
</comment>
<comment type="interaction">
    <interactant intactId="EBI-741528">
        <id>Q9UKJ5</id>
    </interactant>
    <interactant intactId="EBI-11749135">
        <id>Q8IUG1</id>
        <label>KRTAP1-3</label>
    </interactant>
    <organismsDiffer>false</organismsDiffer>
    <experiments>3</experiments>
</comment>
<comment type="interaction">
    <interactant intactId="EBI-741528">
        <id>Q9UKJ5</id>
    </interactant>
    <interactant intactId="EBI-10172290">
        <id>P60409</id>
        <label>KRTAP10-7</label>
    </interactant>
    <organismsDiffer>false</organismsDiffer>
    <experiments>3</experiments>
</comment>
<comment type="interaction">
    <interactant intactId="EBI-741528">
        <id>Q9UKJ5</id>
    </interactant>
    <interactant intactId="EBI-10171774">
        <id>P60410</id>
        <label>KRTAP10-8</label>
    </interactant>
    <organismsDiffer>false</organismsDiffer>
    <experiments>6</experiments>
</comment>
<comment type="interaction">
    <interactant intactId="EBI-741528">
        <id>Q9UKJ5</id>
    </interactant>
    <interactant intactId="EBI-10172052">
        <id>P60411</id>
        <label>KRTAP10-9</label>
    </interactant>
    <organismsDiffer>false</organismsDiffer>
    <experiments>3</experiments>
</comment>
<comment type="interaction">
    <interactant intactId="EBI-741528">
        <id>Q9UKJ5</id>
    </interactant>
    <interactant intactId="EBI-11953334">
        <id>P60328</id>
        <label>KRTAP12-3</label>
    </interactant>
    <organismsDiffer>false</organismsDiffer>
    <experiments>3</experiments>
</comment>
<comment type="interaction">
    <interactant intactId="EBI-741528">
        <id>Q9UKJ5</id>
    </interactant>
    <interactant intactId="EBI-14065470">
        <id>Q9BYR9</id>
        <label>KRTAP2-4</label>
    </interactant>
    <organismsDiffer>false</organismsDiffer>
    <experiments>3</experiments>
</comment>
<comment type="interaction">
    <interactant intactId="EBI-741528">
        <id>Q9UKJ5</id>
    </interactant>
    <interactant intactId="EBI-10172511">
        <id>Q9BYR5</id>
        <label>KRTAP4-2</label>
    </interactant>
    <organismsDiffer>false</organismsDiffer>
    <experiments>3</experiments>
</comment>
<comment type="interaction">
    <interactant intactId="EBI-741528">
        <id>Q9UKJ5</id>
    </interactant>
    <interactant intactId="EBI-3958099">
        <id>P26371</id>
        <label>KRTAP5-9</label>
    </interactant>
    <organismsDiffer>false</organismsDiffer>
    <experiments>6</experiments>
</comment>
<comment type="interaction">
    <interactant intactId="EBI-741528">
        <id>Q9UKJ5</id>
    </interactant>
    <interactant intactId="EBI-11962084">
        <id>Q3LI66</id>
        <label>KRTAP6-2</label>
    </interactant>
    <organismsDiffer>false</organismsDiffer>
    <experiments>3</experiments>
</comment>
<comment type="interaction">
    <interactant intactId="EBI-741528">
        <id>Q9UKJ5</id>
    </interactant>
    <interactant intactId="EBI-11962058">
        <id>Q5T7P2</id>
        <label>LCE1A</label>
    </interactant>
    <organismsDiffer>false</organismsDiffer>
    <experiments>3</experiments>
</comment>
<comment type="interaction">
    <interactant intactId="EBI-741528">
        <id>Q9UKJ5</id>
    </interactant>
    <interactant intactId="EBI-12224199">
        <id>Q5T751</id>
        <label>LCE1C</label>
    </interactant>
    <organismsDiffer>false</organismsDiffer>
    <experiments>3</experiments>
</comment>
<comment type="interaction">
    <interactant intactId="EBI-741528">
        <id>Q9UKJ5</id>
    </interactant>
    <interactant intactId="EBI-11958008">
        <id>Q5T754</id>
        <label>LCE1F</label>
    </interactant>
    <organismsDiffer>false</organismsDiffer>
    <experiments>3</experiments>
</comment>
<comment type="interaction">
    <interactant intactId="EBI-741528">
        <id>Q9UKJ5</id>
    </interactant>
    <interactant intactId="EBI-11973993">
        <id>Q5TA81</id>
        <label>LCE2C</label>
    </interactant>
    <organismsDiffer>false</organismsDiffer>
    <experiments>3</experiments>
</comment>
<comment type="interaction">
    <interactant intactId="EBI-741528">
        <id>Q9UKJ5</id>
    </interactant>
    <interactant intactId="EBI-9394625">
        <id>Q5TA76</id>
        <label>LCE3A</label>
    </interactant>
    <organismsDiffer>false</organismsDiffer>
    <experiments>3</experiments>
</comment>
<comment type="interaction">
    <interactant intactId="EBI-741528">
        <id>Q9UKJ5</id>
    </interactant>
    <interactant intactId="EBI-10245291">
        <id>Q5T5A8</id>
        <label>LCE3C</label>
    </interactant>
    <organismsDiffer>false</organismsDiffer>
    <experiments>6</experiments>
</comment>
<comment type="interaction">
    <interactant intactId="EBI-741528">
        <id>Q9UKJ5</id>
    </interactant>
    <interactant intactId="EBI-6658837">
        <id>Q9BYE3</id>
        <label>LCE3D</label>
    </interactant>
    <organismsDiffer>false</organismsDiffer>
    <experiments>3</experiments>
</comment>
<comment type="interaction">
    <interactant intactId="EBI-741528">
        <id>Q9UKJ5</id>
    </interactant>
    <interactant intactId="EBI-11955689">
        <id>Q5TCM9</id>
        <label>LCE5A</label>
    </interactant>
    <organismsDiffer>false</organismsDiffer>
    <experiments>3</experiments>
</comment>
<comment type="interaction">
    <interactant intactId="EBI-741528">
        <id>Q9UKJ5</id>
    </interactant>
    <interactant intactId="EBI-11911016">
        <id>P80188</id>
        <label>LCN2</label>
    </interactant>
    <organismsDiffer>false</organismsDiffer>
    <experiments>3</experiments>
</comment>
<comment type="interaction">
    <interactant intactId="EBI-741528">
        <id>Q9UKJ5</id>
    </interactant>
    <interactant intactId="EBI-741037">
        <id>Q9BRK4</id>
        <label>LZTS2</label>
    </interactant>
    <organismsDiffer>false</organismsDiffer>
    <experiments>3</experiments>
</comment>
<comment type="interaction">
    <interactant intactId="EBI-741528">
        <id>Q9UKJ5</id>
    </interactant>
    <interactant intactId="EBI-748397">
        <id>P50222</id>
        <label>MEOX2</label>
    </interactant>
    <organismsDiffer>false</organismsDiffer>
    <experiments>3</experiments>
</comment>
<comment type="interaction">
    <interactant intactId="EBI-741528">
        <id>Q9UKJ5</id>
    </interactant>
    <interactant intactId="EBI-16439278">
        <id>Q6FHY5</id>
        <label>MEOX2</label>
    </interactant>
    <organismsDiffer>false</organismsDiffer>
    <experiments>3</experiments>
</comment>
<comment type="interaction">
    <interactant intactId="EBI-741528">
        <id>Q9UKJ5</id>
    </interactant>
    <interactant intactId="EBI-11522433">
        <id>Q5JR59-3</id>
        <label>MTUS2</label>
    </interactant>
    <organismsDiffer>false</organismsDiffer>
    <experiments>3</experiments>
</comment>
<comment type="interaction">
    <interactant intactId="EBI-741528">
        <id>Q9UKJ5</id>
    </interactant>
    <interactant intactId="EBI-17491620">
        <id>P13349</id>
        <label>MYF5</label>
    </interactant>
    <organismsDiffer>false</organismsDiffer>
    <experiments>3</experiments>
</comment>
<comment type="interaction">
    <interactant intactId="EBI-741528">
        <id>Q9UKJ5</id>
    </interactant>
    <interactant intactId="EBI-2858213">
        <id>Q86VE0</id>
        <label>MYPOP</label>
    </interactant>
    <organismsDiffer>false</organismsDiffer>
    <experiments>3</experiments>
</comment>
<comment type="interaction">
    <interactant intactId="EBI-741528">
        <id>Q9UKJ5</id>
    </interactant>
    <interactant intactId="EBI-1246238">
        <id>P17568</id>
        <label>NDUFB7</label>
    </interactant>
    <organismsDiffer>false</organismsDiffer>
    <experiments>3</experiments>
</comment>
<comment type="interaction">
    <interactant intactId="EBI-741528">
        <id>Q9UKJ5</id>
    </interactant>
    <interactant intactId="EBI-945833">
        <id>Q7Z3S9</id>
        <label>NOTCH2NLA</label>
    </interactant>
    <organismsDiffer>false</organismsDiffer>
    <experiments>3</experiments>
</comment>
<comment type="interaction">
    <interactant intactId="EBI-741528">
        <id>Q9UKJ5</id>
    </interactant>
    <interactant intactId="EBI-22310682">
        <id>P0DPK4</id>
        <label>NOTCH2NLC</label>
    </interactant>
    <organismsDiffer>false</organismsDiffer>
    <experiments>3</experiments>
</comment>
<comment type="interaction">
    <interactant intactId="EBI-741528">
        <id>Q9UKJ5</id>
    </interactant>
    <interactant intactId="EBI-740446">
        <id>P32242</id>
        <label>OTX1</label>
    </interactant>
    <organismsDiffer>false</organismsDiffer>
    <experiments>4</experiments>
</comment>
<comment type="interaction">
    <interactant intactId="EBI-741528">
        <id>Q9UKJ5</id>
    </interactant>
    <interactant intactId="EBI-745767">
        <id>Q96S99</id>
        <label>PLEKHF1</label>
    </interactant>
    <organismsDiffer>false</organismsDiffer>
    <experiments>3</experiments>
</comment>
<comment type="interaction">
    <interactant intactId="EBI-741528">
        <id>Q9UKJ5</id>
    </interactant>
    <interactant intactId="EBI-742388">
        <id>Q9H8W4</id>
        <label>PLEKHF2</label>
    </interactant>
    <organismsDiffer>false</organismsDiffer>
    <experiments>3</experiments>
</comment>
<comment type="interaction">
    <interactant intactId="EBI-741528">
        <id>Q9UKJ5</id>
    </interactant>
    <interactant intactId="EBI-949255">
        <id>Q58EX7</id>
        <label>PLEKHG4</label>
    </interactant>
    <organismsDiffer>false</organismsDiffer>
    <experiments>3</experiments>
</comment>
<comment type="interaction">
    <interactant intactId="EBI-741528">
        <id>Q9UKJ5</id>
    </interactant>
    <interactant intactId="EBI-302345">
        <id>Q8ND90</id>
        <label>PNMA1</label>
    </interactant>
    <organismsDiffer>false</organismsDiffer>
    <experiments>3</experiments>
</comment>
<comment type="interaction">
    <interactant intactId="EBI-741528">
        <id>Q9UKJ5</id>
    </interactant>
    <interactant intactId="EBI-17236143">
        <id>Q12837</id>
        <label>POU4F2</label>
    </interactant>
    <organismsDiffer>false</organismsDiffer>
    <experiments>3</experiments>
</comment>
<comment type="interaction">
    <interactant intactId="EBI-741528">
        <id>Q9UKJ5</id>
    </interactant>
    <interactant intactId="EBI-10829018">
        <id>Q04864-2</id>
        <label>REL</label>
    </interactant>
    <organismsDiffer>false</organismsDiffer>
    <experiments>3</experiments>
</comment>
<comment type="interaction">
    <interactant intactId="EBI-741528">
        <id>Q9UKJ5</id>
    </interactant>
    <interactant intactId="EBI-748391">
        <id>Q9BWG6</id>
        <label>SCNM1</label>
    </interactant>
    <organismsDiffer>false</organismsDiffer>
    <experiments>3</experiments>
</comment>
<comment type="interaction">
    <interactant intactId="EBI-741528">
        <id>Q9UKJ5</id>
    </interactant>
    <interactant intactId="EBI-727004">
        <id>O00560</id>
        <label>SDCBP</label>
    </interactant>
    <organismsDiffer>false</organismsDiffer>
    <experiments>3</experiments>
</comment>
<comment type="interaction">
    <interactant intactId="EBI-741528">
        <id>Q9UKJ5</id>
    </interactant>
    <interactant intactId="EBI-533224">
        <id>P15884</id>
        <label>TCF4</label>
    </interactant>
    <organismsDiffer>false</organismsDiffer>
    <experiments>3</experiments>
</comment>
<comment type="interaction">
    <interactant intactId="EBI-741528">
        <id>Q9UKJ5</id>
    </interactant>
    <interactant intactId="EBI-373456">
        <id>Q9Y3S2</id>
        <label>ZNF330</label>
    </interactant>
    <organismsDiffer>false</organismsDiffer>
    <experiments>3</experiments>
</comment>
<comment type="interaction">
    <interactant intactId="EBI-741528">
        <id>Q9UKJ5</id>
    </interactant>
    <interactant intactId="EBI-11962574">
        <id>Q96EG3</id>
        <label>ZNF837</label>
    </interactant>
    <organismsDiffer>false</organismsDiffer>
    <experiments>3</experiments>
</comment>
<comment type="subcellular location">
    <subcellularLocation>
        <location evidence="3">Cell membrane</location>
    </subcellularLocation>
    <subcellularLocation>
        <location evidence="3">Cytoplasmic vesicle</location>
    </subcellularLocation>
    <text>Also present at a Golgi-like vesicular compartment and at scattered vesicles.</text>
</comment>
<comment type="PTM">
    <text evidence="3">Palmitoylation in the CHIC motif is required for membrane association.</text>
</comment>
<comment type="disease">
    <text evidence="2">A chromosomal aberration involving CHIC2 is found in a form of acute myeloid leukemia (AML). Translocation t(4;12)(q12;p13) with ETV6.</text>
</comment>
<comment type="similarity">
    <text evidence="4">Belongs to the CHIC family.</text>
</comment>
<comment type="online information" name="Atlas of Genetics and Cytogenetics in Oncology and Haematology">
    <link uri="https://atlasgeneticsoncology.org/gene/373/CHIC2"/>
</comment>
<proteinExistence type="evidence at protein level"/>
<sequence length="165" mass="19254">MADFDEIYEEEEDEERALEEQLLKYSPDPVVVRGSGHVTVFGLSNKFESEFPSSLTGKVAPEEFKASINRVNSCLKKNLPVNVRWLLCGCLCCCCTLGCSMWPVICLSKRTRRSIEKLLEWENNRLYHKLCLHWRLSKRKCETNNMMEYVILIEFLPKTPIFRPD</sequence>
<accession>Q9UKJ5</accession>
<accession>B2R639</accession>
<gene>
    <name type="primary">CHIC2</name>
    <name type="synonym">BTL</name>
</gene>
<organism>
    <name type="scientific">Homo sapiens</name>
    <name type="common">Human</name>
    <dbReference type="NCBI Taxonomy" id="9606"/>
    <lineage>
        <taxon>Eukaryota</taxon>
        <taxon>Metazoa</taxon>
        <taxon>Chordata</taxon>
        <taxon>Craniata</taxon>
        <taxon>Vertebrata</taxon>
        <taxon>Euteleostomi</taxon>
        <taxon>Mammalia</taxon>
        <taxon>Eutheria</taxon>
        <taxon>Euarchontoglires</taxon>
        <taxon>Primates</taxon>
        <taxon>Haplorrhini</taxon>
        <taxon>Catarrhini</taxon>
        <taxon>Hominidae</taxon>
        <taxon>Homo</taxon>
    </lineage>
</organism>
<name>CHIC2_HUMAN</name>
<keyword id="KW-0002">3D-structure</keyword>
<keyword id="KW-1003">Cell membrane</keyword>
<keyword id="KW-0160">Chromosomal rearrangement</keyword>
<keyword id="KW-0175">Coiled coil</keyword>
<keyword id="KW-0968">Cytoplasmic vesicle</keyword>
<keyword id="KW-0449">Lipoprotein</keyword>
<keyword id="KW-0472">Membrane</keyword>
<keyword id="KW-0564">Palmitate</keyword>
<keyword id="KW-1267">Proteomics identification</keyword>
<keyword id="KW-1185">Reference proteome</keyword>
<dbReference type="EMBL" id="AF159423">
    <property type="protein sequence ID" value="AAD55981.1"/>
    <property type="molecule type" value="mRNA"/>
</dbReference>
<dbReference type="EMBL" id="AK312427">
    <property type="protein sequence ID" value="BAG35336.1"/>
    <property type="molecule type" value="mRNA"/>
</dbReference>
<dbReference type="EMBL" id="CH471057">
    <property type="protein sequence ID" value="EAX05453.1"/>
    <property type="molecule type" value="Genomic_DNA"/>
</dbReference>
<dbReference type="EMBL" id="BC034691">
    <property type="protein sequence ID" value="AAH34691.1"/>
    <property type="molecule type" value="mRNA"/>
</dbReference>
<dbReference type="CCDS" id="CCDS3493.1"/>
<dbReference type="RefSeq" id="NP_036242.1">
    <property type="nucleotide sequence ID" value="NM_012110.4"/>
</dbReference>
<dbReference type="PDB" id="8SUV">
    <property type="method" value="X-ray"/>
    <property type="resolution" value="1.63 A"/>
    <property type="chains" value="F/G/H/I=154-165"/>
</dbReference>
<dbReference type="PDBsum" id="8SUV"/>
<dbReference type="SMR" id="Q9UKJ5"/>
<dbReference type="BioGRID" id="117716">
    <property type="interactions" value="86"/>
</dbReference>
<dbReference type="FunCoup" id="Q9UKJ5">
    <property type="interactions" value="1590"/>
</dbReference>
<dbReference type="IntAct" id="Q9UKJ5">
    <property type="interactions" value="65"/>
</dbReference>
<dbReference type="STRING" id="9606.ENSP00000263921"/>
<dbReference type="iPTMnet" id="Q9UKJ5"/>
<dbReference type="PhosphoSitePlus" id="Q9UKJ5"/>
<dbReference type="SwissPalm" id="Q9UKJ5"/>
<dbReference type="BioMuta" id="CHIC2"/>
<dbReference type="DMDM" id="62901505"/>
<dbReference type="jPOST" id="Q9UKJ5"/>
<dbReference type="MassIVE" id="Q9UKJ5"/>
<dbReference type="PaxDb" id="9606-ENSP00000263921"/>
<dbReference type="PeptideAtlas" id="Q9UKJ5"/>
<dbReference type="ProteomicsDB" id="84809"/>
<dbReference type="Antibodypedia" id="12265">
    <property type="antibodies" value="137 antibodies from 22 providers"/>
</dbReference>
<dbReference type="DNASU" id="26511"/>
<dbReference type="Ensembl" id="ENST00000263921.8">
    <property type="protein sequence ID" value="ENSP00000263921.3"/>
    <property type="gene ID" value="ENSG00000109220.12"/>
</dbReference>
<dbReference type="GeneID" id="26511"/>
<dbReference type="KEGG" id="hsa:26511"/>
<dbReference type="MANE-Select" id="ENST00000263921.8">
    <property type="protein sequence ID" value="ENSP00000263921.3"/>
    <property type="RefSeq nucleotide sequence ID" value="NM_012110.4"/>
    <property type="RefSeq protein sequence ID" value="NP_036242.1"/>
</dbReference>
<dbReference type="UCSC" id="uc003haj.3">
    <property type="organism name" value="human"/>
</dbReference>
<dbReference type="AGR" id="HGNC:1935"/>
<dbReference type="CTD" id="26511"/>
<dbReference type="DisGeNET" id="26511"/>
<dbReference type="GeneCards" id="CHIC2"/>
<dbReference type="HGNC" id="HGNC:1935">
    <property type="gene designation" value="CHIC2"/>
</dbReference>
<dbReference type="HPA" id="ENSG00000109220">
    <property type="expression patterns" value="Low tissue specificity"/>
</dbReference>
<dbReference type="MalaCards" id="CHIC2"/>
<dbReference type="MIM" id="604332">
    <property type="type" value="gene"/>
</dbReference>
<dbReference type="neXtProt" id="NX_Q9UKJ5"/>
<dbReference type="OpenTargets" id="ENSG00000109220"/>
<dbReference type="PharmGKB" id="PA26466"/>
<dbReference type="VEuPathDB" id="HostDB:ENSG00000109220"/>
<dbReference type="eggNOG" id="KOG4101">
    <property type="taxonomic scope" value="Eukaryota"/>
</dbReference>
<dbReference type="GeneTree" id="ENSGT00390000003601"/>
<dbReference type="HOGENOM" id="CLU_100628_1_0_1"/>
<dbReference type="InParanoid" id="Q9UKJ5"/>
<dbReference type="OMA" id="EKCLDHE"/>
<dbReference type="OrthoDB" id="67682at2759"/>
<dbReference type="PAN-GO" id="Q9UKJ5">
    <property type="GO annotations" value="2 GO annotations based on evolutionary models"/>
</dbReference>
<dbReference type="PhylomeDB" id="Q9UKJ5"/>
<dbReference type="TreeFam" id="TF314908"/>
<dbReference type="PathwayCommons" id="Q9UKJ5"/>
<dbReference type="SignaLink" id="Q9UKJ5"/>
<dbReference type="BioGRID-ORCS" id="26511">
    <property type="hits" value="21 hits in 1156 CRISPR screens"/>
</dbReference>
<dbReference type="ChiTaRS" id="CHIC2">
    <property type="organism name" value="human"/>
</dbReference>
<dbReference type="GenomeRNAi" id="26511"/>
<dbReference type="Pharos" id="Q9UKJ5">
    <property type="development level" value="Tbio"/>
</dbReference>
<dbReference type="PRO" id="PR:Q9UKJ5"/>
<dbReference type="Proteomes" id="UP000005640">
    <property type="component" value="Chromosome 4"/>
</dbReference>
<dbReference type="RNAct" id="Q9UKJ5">
    <property type="molecule type" value="protein"/>
</dbReference>
<dbReference type="Bgee" id="ENSG00000109220">
    <property type="expression patterns" value="Expressed in right testis and 183 other cell types or tissues"/>
</dbReference>
<dbReference type="ExpressionAtlas" id="Q9UKJ5">
    <property type="expression patterns" value="baseline and differential"/>
</dbReference>
<dbReference type="GO" id="GO:0005794">
    <property type="term" value="C:Golgi apparatus"/>
    <property type="evidence" value="ECO:0007669"/>
    <property type="project" value="Ensembl"/>
</dbReference>
<dbReference type="GO" id="GO:0005798">
    <property type="term" value="C:Golgi-associated vesicle"/>
    <property type="evidence" value="ECO:0000318"/>
    <property type="project" value="GO_Central"/>
</dbReference>
<dbReference type="GO" id="GO:0043231">
    <property type="term" value="C:intracellular membrane-bounded organelle"/>
    <property type="evidence" value="ECO:0000314"/>
    <property type="project" value="HPA"/>
</dbReference>
<dbReference type="GO" id="GO:0005886">
    <property type="term" value="C:plasma membrane"/>
    <property type="evidence" value="ECO:0000314"/>
    <property type="project" value="HPA"/>
</dbReference>
<dbReference type="InterPro" id="IPR039735">
    <property type="entry name" value="CHIC1/2"/>
</dbReference>
<dbReference type="InterPro" id="IPR019383">
    <property type="entry name" value="Golgin_A_7/ERF4"/>
</dbReference>
<dbReference type="PANTHER" id="PTHR13005">
    <property type="entry name" value="CYSTEINE-RICH HYDROPHOBIC DOMAIN PROTEIN BRAIN X-LINKED PROTEIN"/>
    <property type="match status" value="1"/>
</dbReference>
<dbReference type="PANTHER" id="PTHR13005:SF3">
    <property type="entry name" value="CYSTEINE-RICH HYDROPHOBIC DOMAIN-CONTAINING PROTEIN 2"/>
    <property type="match status" value="1"/>
</dbReference>
<dbReference type="Pfam" id="PF10256">
    <property type="entry name" value="Erf4"/>
    <property type="match status" value="1"/>
</dbReference>